<comment type="catalytic activity">
    <reaction evidence="1">
        <text>2-(N(omega)-L-arginino)succinate = fumarate + L-arginine</text>
        <dbReference type="Rhea" id="RHEA:24020"/>
        <dbReference type="ChEBI" id="CHEBI:29806"/>
        <dbReference type="ChEBI" id="CHEBI:32682"/>
        <dbReference type="ChEBI" id="CHEBI:57472"/>
        <dbReference type="EC" id="4.3.2.1"/>
    </reaction>
</comment>
<comment type="pathway">
    <text evidence="1">Amino-acid biosynthesis; L-arginine biosynthesis; L-arginine from L-ornithine and carbamoyl phosphate: step 3/3.</text>
</comment>
<comment type="subcellular location">
    <subcellularLocation>
        <location evidence="1">Cytoplasm</location>
    </subcellularLocation>
</comment>
<comment type="similarity">
    <text evidence="1">Belongs to the lyase 1 family. Argininosuccinate lyase subfamily.</text>
</comment>
<proteinExistence type="inferred from homology"/>
<sequence>MSNLKLWEGRFSKSTAQIFDLFNASIMTDIKLFEYDILGSVAHVKMLAKCNIIREDEAKLIIDSLYQILEDFKLGKIVFGISDEDVHMLIEKELIKRIGEVGKKVHTARSRNDQVALDERLFCREKNLYLQELIKTLINTITTLAEENIDVIMPGFTHLQKAQPILFSHYILAYAQMLKRDLLRLRHNYSMTNSSPLGSAALAGTTFEIDRFFVASELGFESVTENSVDTVSDRDFILEMLFSLAMIQMHLSRLAEDFIIFNTDEFKFIELDDSFCSGSSIMPQKKNPDALELIRGKTGRVYADLIGLLTVLKGLPLSYNKDLQEDKEFLFDSIETVEMSLIVINEILKTLKIDKENMVNSCKSGFINATDLADYLVTKGVPFRDAHFIVGNIVKYCIESDKTLEDLSLEEYKRFCEKIQEDVYQFIKIETCVNRRKSYGGTSLESVRKQIDNLKEFLNKLK</sequence>
<keyword id="KW-0028">Amino-acid biosynthesis</keyword>
<keyword id="KW-0055">Arginine biosynthesis</keyword>
<keyword id="KW-0963">Cytoplasm</keyword>
<keyword id="KW-0456">Lyase</keyword>
<organism>
    <name type="scientific">Caldicellulosiruptor bescii (strain ATCC BAA-1888 / DSM 6725 / KCTC 15123 / Z-1320)</name>
    <name type="common">Anaerocellum thermophilum</name>
    <dbReference type="NCBI Taxonomy" id="521460"/>
    <lineage>
        <taxon>Bacteria</taxon>
        <taxon>Bacillati</taxon>
        <taxon>Bacillota</taxon>
        <taxon>Bacillota incertae sedis</taxon>
        <taxon>Caldicellulosiruptorales</taxon>
        <taxon>Caldicellulosiruptoraceae</taxon>
        <taxon>Caldicellulosiruptor</taxon>
    </lineage>
</organism>
<name>ARLY_CALBD</name>
<dbReference type="EC" id="4.3.2.1" evidence="1"/>
<dbReference type="EMBL" id="CP001393">
    <property type="protein sequence ID" value="ACM60348.1"/>
    <property type="molecule type" value="Genomic_DNA"/>
</dbReference>
<dbReference type="SMR" id="B9MRP4"/>
<dbReference type="STRING" id="521460.Athe_1248"/>
<dbReference type="KEGG" id="ate:Athe_1248"/>
<dbReference type="eggNOG" id="COG0165">
    <property type="taxonomic scope" value="Bacteria"/>
</dbReference>
<dbReference type="HOGENOM" id="CLU_027272_2_3_9"/>
<dbReference type="UniPathway" id="UPA00068">
    <property type="reaction ID" value="UER00114"/>
</dbReference>
<dbReference type="Proteomes" id="UP000007723">
    <property type="component" value="Chromosome"/>
</dbReference>
<dbReference type="GO" id="GO:0005829">
    <property type="term" value="C:cytosol"/>
    <property type="evidence" value="ECO:0007669"/>
    <property type="project" value="TreeGrafter"/>
</dbReference>
<dbReference type="GO" id="GO:0004056">
    <property type="term" value="F:argininosuccinate lyase activity"/>
    <property type="evidence" value="ECO:0007669"/>
    <property type="project" value="UniProtKB-UniRule"/>
</dbReference>
<dbReference type="GO" id="GO:0042450">
    <property type="term" value="P:arginine biosynthetic process via ornithine"/>
    <property type="evidence" value="ECO:0007669"/>
    <property type="project" value="InterPro"/>
</dbReference>
<dbReference type="GO" id="GO:0006526">
    <property type="term" value="P:L-arginine biosynthetic process"/>
    <property type="evidence" value="ECO:0007669"/>
    <property type="project" value="UniProtKB-UniRule"/>
</dbReference>
<dbReference type="CDD" id="cd01359">
    <property type="entry name" value="Argininosuccinate_lyase"/>
    <property type="match status" value="1"/>
</dbReference>
<dbReference type="FunFam" id="1.10.40.30:FF:000001">
    <property type="entry name" value="Argininosuccinate lyase"/>
    <property type="match status" value="1"/>
</dbReference>
<dbReference type="FunFam" id="1.20.200.10:FF:000015">
    <property type="entry name" value="argininosuccinate lyase isoform X2"/>
    <property type="match status" value="1"/>
</dbReference>
<dbReference type="Gene3D" id="1.10.40.30">
    <property type="entry name" value="Fumarase/aspartase (C-terminal domain)"/>
    <property type="match status" value="1"/>
</dbReference>
<dbReference type="Gene3D" id="1.20.200.10">
    <property type="entry name" value="Fumarase/aspartase (Central domain)"/>
    <property type="match status" value="1"/>
</dbReference>
<dbReference type="Gene3D" id="1.10.275.10">
    <property type="entry name" value="Fumarase/aspartase (N-terminal domain)"/>
    <property type="match status" value="1"/>
</dbReference>
<dbReference type="HAMAP" id="MF_00006">
    <property type="entry name" value="Arg_succ_lyase"/>
    <property type="match status" value="1"/>
</dbReference>
<dbReference type="InterPro" id="IPR029419">
    <property type="entry name" value="Arg_succ_lyase_C"/>
</dbReference>
<dbReference type="InterPro" id="IPR009049">
    <property type="entry name" value="Argininosuccinate_lyase"/>
</dbReference>
<dbReference type="InterPro" id="IPR024083">
    <property type="entry name" value="Fumarase/histidase_N"/>
</dbReference>
<dbReference type="InterPro" id="IPR020557">
    <property type="entry name" value="Fumarate_lyase_CS"/>
</dbReference>
<dbReference type="InterPro" id="IPR000362">
    <property type="entry name" value="Fumarate_lyase_fam"/>
</dbReference>
<dbReference type="InterPro" id="IPR022761">
    <property type="entry name" value="Fumarate_lyase_N"/>
</dbReference>
<dbReference type="InterPro" id="IPR008948">
    <property type="entry name" value="L-Aspartase-like"/>
</dbReference>
<dbReference type="NCBIfam" id="TIGR00838">
    <property type="entry name" value="argH"/>
    <property type="match status" value="1"/>
</dbReference>
<dbReference type="PANTHER" id="PTHR43814">
    <property type="entry name" value="ARGININOSUCCINATE LYASE"/>
    <property type="match status" value="1"/>
</dbReference>
<dbReference type="PANTHER" id="PTHR43814:SF1">
    <property type="entry name" value="ARGININOSUCCINATE LYASE"/>
    <property type="match status" value="1"/>
</dbReference>
<dbReference type="Pfam" id="PF14698">
    <property type="entry name" value="ASL_C2"/>
    <property type="match status" value="1"/>
</dbReference>
<dbReference type="Pfam" id="PF00206">
    <property type="entry name" value="Lyase_1"/>
    <property type="match status" value="1"/>
</dbReference>
<dbReference type="PRINTS" id="PR00145">
    <property type="entry name" value="ARGSUCLYASE"/>
</dbReference>
<dbReference type="PRINTS" id="PR00149">
    <property type="entry name" value="FUMRATELYASE"/>
</dbReference>
<dbReference type="SUPFAM" id="SSF48557">
    <property type="entry name" value="L-aspartase-like"/>
    <property type="match status" value="1"/>
</dbReference>
<dbReference type="PROSITE" id="PS00163">
    <property type="entry name" value="FUMARATE_LYASES"/>
    <property type="match status" value="1"/>
</dbReference>
<gene>
    <name evidence="1" type="primary">argH</name>
    <name type="ordered locus">Athe_1248</name>
</gene>
<evidence type="ECO:0000255" key="1">
    <source>
        <dbReference type="HAMAP-Rule" id="MF_00006"/>
    </source>
</evidence>
<accession>B9MRP4</accession>
<reference key="1">
    <citation type="submission" date="2009-01" db="EMBL/GenBank/DDBJ databases">
        <title>Complete sequence of chromosome of Caldicellulosiruptor becscii DSM 6725.</title>
        <authorList>
            <person name="Lucas S."/>
            <person name="Copeland A."/>
            <person name="Lapidus A."/>
            <person name="Glavina del Rio T."/>
            <person name="Tice H."/>
            <person name="Bruce D."/>
            <person name="Goodwin L."/>
            <person name="Pitluck S."/>
            <person name="Sims D."/>
            <person name="Meincke L."/>
            <person name="Brettin T."/>
            <person name="Detter J.C."/>
            <person name="Han C."/>
            <person name="Larimer F."/>
            <person name="Land M."/>
            <person name="Hauser L."/>
            <person name="Kyrpides N."/>
            <person name="Ovchinnikova G."/>
            <person name="Kataeva I."/>
            <person name="Adams M.W.W."/>
        </authorList>
    </citation>
    <scope>NUCLEOTIDE SEQUENCE [LARGE SCALE GENOMIC DNA]</scope>
    <source>
        <strain>ATCC BAA-1888 / DSM 6725 / KCTC 15123 / Z-1320</strain>
    </source>
</reference>
<protein>
    <recommendedName>
        <fullName evidence="1">Argininosuccinate lyase</fullName>
        <shortName evidence="1">ASAL</shortName>
        <ecNumber evidence="1">4.3.2.1</ecNumber>
    </recommendedName>
    <alternativeName>
        <fullName evidence="1">Arginosuccinase</fullName>
    </alternativeName>
</protein>
<feature type="chain" id="PRO_1000116304" description="Argininosuccinate lyase">
    <location>
        <begin position="1"/>
        <end position="462"/>
    </location>
</feature>